<reference key="1">
    <citation type="journal article" date="2003" name="Appl. Microbiol. Biotechnol.">
        <title>The Corynebacterium glutamicum genome: features and impacts on biotechnological processes.</title>
        <authorList>
            <person name="Ikeda M."/>
            <person name="Nakagawa S."/>
        </authorList>
    </citation>
    <scope>NUCLEOTIDE SEQUENCE [LARGE SCALE GENOMIC DNA]</scope>
    <source>
        <strain>ATCC 13032 / DSM 20300 / JCM 1318 / BCRC 11384 / CCUG 27702 / LMG 3730 / NBRC 12168 / NCIMB 10025 / NRRL B-2784 / 534</strain>
    </source>
</reference>
<reference key="2">
    <citation type="journal article" date="2003" name="J. Biotechnol.">
        <title>The complete Corynebacterium glutamicum ATCC 13032 genome sequence and its impact on the production of L-aspartate-derived amino acids and vitamins.</title>
        <authorList>
            <person name="Kalinowski J."/>
            <person name="Bathe B."/>
            <person name="Bartels D."/>
            <person name="Bischoff N."/>
            <person name="Bott M."/>
            <person name="Burkovski A."/>
            <person name="Dusch N."/>
            <person name="Eggeling L."/>
            <person name="Eikmanns B.J."/>
            <person name="Gaigalat L."/>
            <person name="Goesmann A."/>
            <person name="Hartmann M."/>
            <person name="Huthmacher K."/>
            <person name="Kraemer R."/>
            <person name="Linke B."/>
            <person name="McHardy A.C."/>
            <person name="Meyer F."/>
            <person name="Moeckel B."/>
            <person name="Pfefferle W."/>
            <person name="Puehler A."/>
            <person name="Rey D.A."/>
            <person name="Rueckert C."/>
            <person name="Rupp O."/>
            <person name="Sahm H."/>
            <person name="Wendisch V.F."/>
            <person name="Wiegraebe I."/>
            <person name="Tauch A."/>
        </authorList>
    </citation>
    <scope>NUCLEOTIDE SEQUENCE [LARGE SCALE GENOMIC DNA]</scope>
    <source>
        <strain>ATCC 13032 / DSM 20300 / JCM 1318 / BCRC 11384 / CCUG 27702 / LMG 3730 / NBRC 12168 / NCIMB 10025 / NRRL B-2784 / 534</strain>
    </source>
</reference>
<sequence>MSDDRKAIKRALISVYDKTGLEDLAQALHRENVEIVSTGSTAAKIAELGIPVTPVEELTGFPECLEGRVKTLHPKVHAGILADTRKEDHLRQLKELEVAPFQLVVVNLYPFAETVASGADFDACVEQIDIGGPSMVRAAAKNHPSVAVVVSPNRYEDVQEALKTGGFSRAERTKLAAEAFRHTATYDVTVATWMSEQLAAEDSETEFPGWIGTTNTLSRSLRYGENPHQSAALYVGNTRGLAQAKQFHGKEMSYNNYTDSDAAWRAAWDHERPCVAIIKHANPCGIAVSDESIAAAHREAHACDSVSAFGGVIASNREVSVEMANQVAEIFTEVIIAPSYEEGAVEILSQKKNIRILQAEAPVRKGFESREISGGLLVQERDLIHAEGDNSANWTLAAGSAVSPEVLKDLEFAWTAVRSVKSNAILLAKNGATVGVGMGQVNRVDSARLAVDRAGAERATGSVAASDAFFPFADGFEVLAEAGITAVVQPGGSIRDNEVIEAANKAGVTMYLTGARHFAH</sequence>
<feature type="chain" id="PRO_0000192089" description="Bifunctional purine biosynthesis protein PurH">
    <location>
        <begin position="1"/>
        <end position="520"/>
    </location>
</feature>
<feature type="domain" description="MGS-like" evidence="2">
    <location>
        <begin position="1"/>
        <end position="150"/>
    </location>
</feature>
<comment type="catalytic activity">
    <reaction evidence="1">
        <text>(6R)-10-formyltetrahydrofolate + 5-amino-1-(5-phospho-beta-D-ribosyl)imidazole-4-carboxamide = 5-formamido-1-(5-phospho-D-ribosyl)imidazole-4-carboxamide + (6S)-5,6,7,8-tetrahydrofolate</text>
        <dbReference type="Rhea" id="RHEA:22192"/>
        <dbReference type="ChEBI" id="CHEBI:57453"/>
        <dbReference type="ChEBI" id="CHEBI:58467"/>
        <dbReference type="ChEBI" id="CHEBI:58475"/>
        <dbReference type="ChEBI" id="CHEBI:195366"/>
        <dbReference type="EC" id="2.1.2.3"/>
    </reaction>
</comment>
<comment type="catalytic activity">
    <reaction evidence="1">
        <text>IMP + H2O = 5-formamido-1-(5-phospho-D-ribosyl)imidazole-4-carboxamide</text>
        <dbReference type="Rhea" id="RHEA:18445"/>
        <dbReference type="ChEBI" id="CHEBI:15377"/>
        <dbReference type="ChEBI" id="CHEBI:58053"/>
        <dbReference type="ChEBI" id="CHEBI:58467"/>
        <dbReference type="EC" id="3.5.4.10"/>
    </reaction>
</comment>
<comment type="pathway">
    <text evidence="1">Purine metabolism; IMP biosynthesis via de novo pathway; 5-formamido-1-(5-phospho-D-ribosyl)imidazole-4-carboxamide from 5-amino-1-(5-phospho-D-ribosyl)imidazole-4-carboxamide (10-formyl THF route): step 1/1.</text>
</comment>
<comment type="pathway">
    <text evidence="1">Purine metabolism; IMP biosynthesis via de novo pathway; IMP from 5-formamido-1-(5-phospho-D-ribosyl)imidazole-4-carboxamide: step 1/1.</text>
</comment>
<comment type="domain">
    <text evidence="1">The IMP cyclohydrolase activity resides in the N-terminal region.</text>
</comment>
<comment type="similarity">
    <text evidence="1">Belongs to the PurH family.</text>
</comment>
<accession>Q8NS21</accession>
<proteinExistence type="inferred from homology"/>
<organism>
    <name type="scientific">Corynebacterium glutamicum (strain ATCC 13032 / DSM 20300 / JCM 1318 / BCRC 11384 / CCUG 27702 / LMG 3730 / NBRC 12168 / NCIMB 10025 / NRRL B-2784 / 534)</name>
    <dbReference type="NCBI Taxonomy" id="196627"/>
    <lineage>
        <taxon>Bacteria</taxon>
        <taxon>Bacillati</taxon>
        <taxon>Actinomycetota</taxon>
        <taxon>Actinomycetes</taxon>
        <taxon>Mycobacteriales</taxon>
        <taxon>Corynebacteriaceae</taxon>
        <taxon>Corynebacterium</taxon>
    </lineage>
</organism>
<gene>
    <name evidence="1" type="primary">purH</name>
    <name type="ordered locus">Cgl0861</name>
    <name type="ordered locus">cg0984</name>
</gene>
<name>PUR9_CORGL</name>
<protein>
    <recommendedName>
        <fullName evidence="1">Bifunctional purine biosynthesis protein PurH</fullName>
    </recommendedName>
    <domain>
        <recommendedName>
            <fullName evidence="1">Phosphoribosylaminoimidazolecarboxamide formyltransferase</fullName>
            <ecNumber evidence="1">2.1.2.3</ecNumber>
        </recommendedName>
        <alternativeName>
            <fullName evidence="1">AICAR transformylase</fullName>
        </alternativeName>
    </domain>
    <domain>
        <recommendedName>
            <fullName evidence="1">IMP cyclohydrolase</fullName>
            <ecNumber evidence="1">3.5.4.10</ecNumber>
        </recommendedName>
        <alternativeName>
            <fullName evidence="1">ATIC</fullName>
        </alternativeName>
        <alternativeName>
            <fullName evidence="1">IMP synthase</fullName>
        </alternativeName>
        <alternativeName>
            <fullName evidence="1">Inosinicase</fullName>
        </alternativeName>
    </domain>
</protein>
<keyword id="KW-0378">Hydrolase</keyword>
<keyword id="KW-0511">Multifunctional enzyme</keyword>
<keyword id="KW-0658">Purine biosynthesis</keyword>
<keyword id="KW-1185">Reference proteome</keyword>
<keyword id="KW-0808">Transferase</keyword>
<dbReference type="EC" id="2.1.2.3" evidence="1"/>
<dbReference type="EC" id="3.5.4.10" evidence="1"/>
<dbReference type="EMBL" id="BA000036">
    <property type="protein sequence ID" value="BAB98254.1"/>
    <property type="molecule type" value="Genomic_DNA"/>
</dbReference>
<dbReference type="EMBL" id="BX927150">
    <property type="protein sequence ID" value="CAF19567.1"/>
    <property type="molecule type" value="Genomic_DNA"/>
</dbReference>
<dbReference type="RefSeq" id="NP_600090.1">
    <property type="nucleotide sequence ID" value="NC_003450.3"/>
</dbReference>
<dbReference type="RefSeq" id="WP_011013935.1">
    <property type="nucleotide sequence ID" value="NC_006958.1"/>
</dbReference>
<dbReference type="SMR" id="Q8NS21"/>
<dbReference type="STRING" id="196627.cg0984"/>
<dbReference type="GeneID" id="1018856"/>
<dbReference type="KEGG" id="cgb:cg0984"/>
<dbReference type="KEGG" id="cgl:Cgl0861"/>
<dbReference type="PATRIC" id="fig|196627.13.peg.846"/>
<dbReference type="eggNOG" id="COG0138">
    <property type="taxonomic scope" value="Bacteria"/>
</dbReference>
<dbReference type="HOGENOM" id="CLU_016316_5_2_11"/>
<dbReference type="OrthoDB" id="9802065at2"/>
<dbReference type="BioCyc" id="CORYNE:G18NG-10431-MONOMER"/>
<dbReference type="UniPathway" id="UPA00074">
    <property type="reaction ID" value="UER00133"/>
</dbReference>
<dbReference type="UniPathway" id="UPA00074">
    <property type="reaction ID" value="UER00135"/>
</dbReference>
<dbReference type="Proteomes" id="UP000000582">
    <property type="component" value="Chromosome"/>
</dbReference>
<dbReference type="Proteomes" id="UP000001009">
    <property type="component" value="Chromosome"/>
</dbReference>
<dbReference type="GO" id="GO:0005829">
    <property type="term" value="C:cytosol"/>
    <property type="evidence" value="ECO:0007669"/>
    <property type="project" value="TreeGrafter"/>
</dbReference>
<dbReference type="GO" id="GO:0003937">
    <property type="term" value="F:IMP cyclohydrolase activity"/>
    <property type="evidence" value="ECO:0007669"/>
    <property type="project" value="UniProtKB-UniRule"/>
</dbReference>
<dbReference type="GO" id="GO:0004643">
    <property type="term" value="F:phosphoribosylaminoimidazolecarboxamide formyltransferase activity"/>
    <property type="evidence" value="ECO:0007669"/>
    <property type="project" value="UniProtKB-UniRule"/>
</dbReference>
<dbReference type="GO" id="GO:0006189">
    <property type="term" value="P:'de novo' IMP biosynthetic process"/>
    <property type="evidence" value="ECO:0007669"/>
    <property type="project" value="UniProtKB-UniRule"/>
</dbReference>
<dbReference type="CDD" id="cd01421">
    <property type="entry name" value="IMPCH"/>
    <property type="match status" value="1"/>
</dbReference>
<dbReference type="FunFam" id="3.40.140.20:FF:000001">
    <property type="entry name" value="Bifunctional purine biosynthesis protein PurH"/>
    <property type="match status" value="1"/>
</dbReference>
<dbReference type="FunFam" id="3.40.140.20:FF:000002">
    <property type="entry name" value="Bifunctional purine biosynthesis protein PurH"/>
    <property type="match status" value="1"/>
</dbReference>
<dbReference type="FunFam" id="3.40.50.1380:FF:000001">
    <property type="entry name" value="Bifunctional purine biosynthesis protein PurH"/>
    <property type="match status" value="1"/>
</dbReference>
<dbReference type="Gene3D" id="3.40.140.20">
    <property type="match status" value="2"/>
</dbReference>
<dbReference type="Gene3D" id="3.40.50.1380">
    <property type="entry name" value="Methylglyoxal synthase-like domain"/>
    <property type="match status" value="1"/>
</dbReference>
<dbReference type="HAMAP" id="MF_00139">
    <property type="entry name" value="PurH"/>
    <property type="match status" value="1"/>
</dbReference>
<dbReference type="InterPro" id="IPR024051">
    <property type="entry name" value="AICAR_Tfase_dup_dom_sf"/>
</dbReference>
<dbReference type="InterPro" id="IPR016193">
    <property type="entry name" value="Cytidine_deaminase-like"/>
</dbReference>
<dbReference type="InterPro" id="IPR011607">
    <property type="entry name" value="MGS-like_dom"/>
</dbReference>
<dbReference type="InterPro" id="IPR036914">
    <property type="entry name" value="MGS-like_dom_sf"/>
</dbReference>
<dbReference type="InterPro" id="IPR002695">
    <property type="entry name" value="PurH-like"/>
</dbReference>
<dbReference type="NCBIfam" id="NF002049">
    <property type="entry name" value="PRK00881.1"/>
    <property type="match status" value="1"/>
</dbReference>
<dbReference type="NCBIfam" id="TIGR00355">
    <property type="entry name" value="purH"/>
    <property type="match status" value="1"/>
</dbReference>
<dbReference type="PANTHER" id="PTHR11692:SF0">
    <property type="entry name" value="BIFUNCTIONAL PURINE BIOSYNTHESIS PROTEIN ATIC"/>
    <property type="match status" value="1"/>
</dbReference>
<dbReference type="PANTHER" id="PTHR11692">
    <property type="entry name" value="BIFUNCTIONAL PURINE BIOSYNTHESIS PROTEIN PURH"/>
    <property type="match status" value="1"/>
</dbReference>
<dbReference type="Pfam" id="PF01808">
    <property type="entry name" value="AICARFT_IMPCHas"/>
    <property type="match status" value="1"/>
</dbReference>
<dbReference type="Pfam" id="PF02142">
    <property type="entry name" value="MGS"/>
    <property type="match status" value="1"/>
</dbReference>
<dbReference type="PIRSF" id="PIRSF000414">
    <property type="entry name" value="AICARFT_IMPCHas"/>
    <property type="match status" value="1"/>
</dbReference>
<dbReference type="SMART" id="SM00798">
    <property type="entry name" value="AICARFT_IMPCHas"/>
    <property type="match status" value="1"/>
</dbReference>
<dbReference type="SMART" id="SM00851">
    <property type="entry name" value="MGS"/>
    <property type="match status" value="1"/>
</dbReference>
<dbReference type="SUPFAM" id="SSF53927">
    <property type="entry name" value="Cytidine deaminase-like"/>
    <property type="match status" value="1"/>
</dbReference>
<dbReference type="SUPFAM" id="SSF52335">
    <property type="entry name" value="Methylglyoxal synthase-like"/>
    <property type="match status" value="1"/>
</dbReference>
<dbReference type="PROSITE" id="PS51855">
    <property type="entry name" value="MGS"/>
    <property type="match status" value="1"/>
</dbReference>
<evidence type="ECO:0000255" key="1">
    <source>
        <dbReference type="HAMAP-Rule" id="MF_00139"/>
    </source>
</evidence>
<evidence type="ECO:0000255" key="2">
    <source>
        <dbReference type="PROSITE-ProRule" id="PRU01202"/>
    </source>
</evidence>